<accession>P84865</accession>
<proteinExistence type="evidence at protein level"/>
<name>MT1_NEOLU</name>
<sequence length="24" mass="2331">SPCTCSTCNCAGACNSCSCTSCSH</sequence>
<protein>
    <recommendedName>
        <fullName>Metallothionein</fullName>
    </recommendedName>
</protein>
<dbReference type="GO" id="GO:0046911">
    <property type="term" value="F:metal chelating activity"/>
    <property type="evidence" value="ECO:0000314"/>
    <property type="project" value="UniProtKB"/>
</dbReference>
<evidence type="ECO:0000255" key="1"/>
<evidence type="ECO:0000269" key="2">
    <source>
    </source>
</evidence>
<evidence type="ECO:0000305" key="3"/>
<evidence type="ECO:0000305" key="4">
    <source>
    </source>
</evidence>
<comment type="function">
    <text evidence="2">Metallothioneins have a high content of cysteine residues that bind various heavy metals.</text>
</comment>
<comment type="induction">
    <text evidence="2">By cadmium.</text>
</comment>
<comment type="PTM">
    <text evidence="3">Contains 4 disulfide bonds.</text>
</comment>
<comment type="mass spectrometry" mass="2321.5" method="MALDI" evidence="2">
    <text>The measured mass is that of apo-metallothionein with intact disulfide bonds.</text>
</comment>
<comment type="mass spectrometry" mass="2329.7" method="MALDI" evidence="2">
    <text>The measured mass is that of apo-metallothionein treated with acid to cleave disulfide bonds.</text>
</comment>
<comment type="mass spectrometry" mass="2431.5" method="MALDI" evidence="2">
    <text>The measured mass is that of metallothionein with intact disulfide bonds chelating one cadmium ion.</text>
</comment>
<comment type="mass spectrometry" mass="2541.5" method="MALDI" evidence="2">
    <text>The measured mass is that of metallothionein with intact disulfide bonds chelating 2 cadmium ions.</text>
</comment>
<comment type="similarity">
    <text evidence="1">Belongs to the metallothionein superfamily. Type 8 family.</text>
</comment>
<keyword id="KW-0104">Cadmium</keyword>
<keyword id="KW-0903">Direct protein sequencing</keyword>
<keyword id="KW-1015">Disulfide bond</keyword>
<keyword id="KW-0479">Metal-binding</keyword>
<keyword id="KW-0480">Metal-thiolate cluster</keyword>
<reference evidence="3" key="1">
    <citation type="journal article" date="2005" name="Biochem. Biophys. Res. Commun.">
        <title>Cadmium induces a novel metallothionein and phytochelatin 2 in an aquatic fungus.</title>
        <authorList>
            <person name="Jaeckel P."/>
            <person name="Krauss G."/>
            <person name="Menge S."/>
            <person name="Schierhorn A."/>
            <person name="Ruecknagel P."/>
            <person name="Krauss G.J."/>
        </authorList>
    </citation>
    <scope>PROTEIN SEQUENCE</scope>
    <scope>FUNCTION</scope>
    <scope>INDUCTION</scope>
    <scope>MASS SPECTROMETRY</scope>
    <scope>DISULFIDE BONDS</scope>
    <scope>CADMIUM BINDING</scope>
    <source>
        <tissue evidence="2">Mycelium</tissue>
    </source>
</reference>
<organism>
    <name type="scientific">Neonectria lugdunensis</name>
    <name type="common">Aquatic fungus</name>
    <name type="synonym">Heliscus lugdunensis</name>
    <dbReference type="NCBI Taxonomy" id="57155"/>
    <lineage>
        <taxon>Eukaryota</taxon>
        <taxon>Fungi</taxon>
        <taxon>Dikarya</taxon>
        <taxon>Ascomycota</taxon>
        <taxon>Pezizomycotina</taxon>
        <taxon>Sordariomycetes</taxon>
        <taxon>Hypocreomycetidae</taxon>
        <taxon>Hypocreales</taxon>
        <taxon>Nectriaceae</taxon>
        <taxon>Neonectria</taxon>
    </lineage>
</organism>
<feature type="peptide" id="PRO_0000244521" description="Metallothionein" evidence="2">
    <location>
        <begin position="1"/>
        <end position="24"/>
    </location>
</feature>
<feature type="binding site" evidence="4">
    <location>
        <position position="3"/>
    </location>
    <ligand>
        <name>Cd(2+)</name>
        <dbReference type="ChEBI" id="CHEBI:48775"/>
        <label>1</label>
    </ligand>
</feature>
<feature type="binding site" evidence="4">
    <location>
        <position position="5"/>
    </location>
    <ligand>
        <name>Cd(2+)</name>
        <dbReference type="ChEBI" id="CHEBI:48775"/>
        <label>2</label>
    </ligand>
</feature>
<feature type="binding site" evidence="4">
    <location>
        <position position="5"/>
    </location>
    <ligand>
        <name>Cd(2+)</name>
        <dbReference type="ChEBI" id="CHEBI:48775"/>
        <label>3</label>
    </ligand>
</feature>
<feature type="binding site" evidence="4">
    <location>
        <position position="8"/>
    </location>
    <ligand>
        <name>Cd(2+)</name>
        <dbReference type="ChEBI" id="CHEBI:48775"/>
        <label>4</label>
    </ligand>
</feature>
<feature type="binding site" evidence="4">
    <location>
        <position position="8"/>
    </location>
    <ligand>
        <name>Cd(2+)</name>
        <dbReference type="ChEBI" id="CHEBI:48775"/>
        <label>5</label>
    </ligand>
</feature>
<feature type="binding site" evidence="4">
    <location>
        <position position="10"/>
    </location>
    <ligand>
        <name>Cd(2+)</name>
        <dbReference type="ChEBI" id="CHEBI:48775"/>
        <label>6</label>
    </ligand>
</feature>
<feature type="binding site" evidence="4">
    <location>
        <position position="17"/>
    </location>
    <ligand>
        <name>Cd(2+)</name>
        <dbReference type="ChEBI" id="CHEBI:48775"/>
        <label>5</label>
    </ligand>
</feature>
<feature type="binding site" evidence="4">
    <location>
        <position position="17"/>
    </location>
    <ligand>
        <name>Cd(2+)</name>
        <dbReference type="ChEBI" id="CHEBI:48775"/>
        <label>6</label>
    </ligand>
</feature>
<feature type="binding site" evidence="4">
    <location>
        <position position="19"/>
    </location>
    <ligand>
        <name>Cd(2+)</name>
        <dbReference type="ChEBI" id="CHEBI:48775"/>
        <label>3</label>
    </ligand>
</feature>
<feature type="binding site" evidence="4">
    <location>
        <position position="19"/>
    </location>
    <ligand>
        <name>Cd(2+)</name>
        <dbReference type="ChEBI" id="CHEBI:48775"/>
        <label>4</label>
    </ligand>
</feature>
<feature type="binding site" evidence="4">
    <location>
        <position position="22"/>
    </location>
    <ligand>
        <name>Cd(2+)</name>
        <dbReference type="ChEBI" id="CHEBI:48775"/>
        <label>1</label>
    </ligand>
</feature>
<feature type="binding site" evidence="4">
    <location>
        <position position="22"/>
    </location>
    <ligand>
        <name>Cd(2+)</name>
        <dbReference type="ChEBI" id="CHEBI:48775"/>
        <label>2</label>
    </ligand>
</feature>